<protein>
    <recommendedName>
        <fullName evidence="1">ATP synthase subunit b, chloroplastic</fullName>
    </recommendedName>
    <alternativeName>
        <fullName evidence="1">ATP synthase F(0) sector subunit b</fullName>
    </alternativeName>
    <alternativeName>
        <fullName evidence="1">ATPase subunit I</fullName>
    </alternativeName>
</protein>
<name>ATPF_NASOF</name>
<accession>A4QLR9</accession>
<proteinExistence type="inferred from homology"/>
<dbReference type="EMBL" id="AP009376">
    <property type="protein sequence ID" value="BAF50624.1"/>
    <property type="molecule type" value="Genomic_DNA"/>
</dbReference>
<dbReference type="RefSeq" id="YP_001123800.1">
    <property type="nucleotide sequence ID" value="NC_009275.1"/>
</dbReference>
<dbReference type="SMR" id="A4QLR9"/>
<dbReference type="GeneID" id="4962186"/>
<dbReference type="GO" id="GO:0009535">
    <property type="term" value="C:chloroplast thylakoid membrane"/>
    <property type="evidence" value="ECO:0007669"/>
    <property type="project" value="UniProtKB-SubCell"/>
</dbReference>
<dbReference type="GO" id="GO:0045259">
    <property type="term" value="C:proton-transporting ATP synthase complex"/>
    <property type="evidence" value="ECO:0007669"/>
    <property type="project" value="UniProtKB-KW"/>
</dbReference>
<dbReference type="GO" id="GO:0046933">
    <property type="term" value="F:proton-transporting ATP synthase activity, rotational mechanism"/>
    <property type="evidence" value="ECO:0007669"/>
    <property type="project" value="UniProtKB-UniRule"/>
</dbReference>
<dbReference type="CDD" id="cd06503">
    <property type="entry name" value="ATP-synt_Fo_b"/>
    <property type="match status" value="1"/>
</dbReference>
<dbReference type="HAMAP" id="MF_01398">
    <property type="entry name" value="ATP_synth_b_bprime"/>
    <property type="match status" value="1"/>
</dbReference>
<dbReference type="InterPro" id="IPR002146">
    <property type="entry name" value="ATP_synth_b/b'su_bac/chlpt"/>
</dbReference>
<dbReference type="PANTHER" id="PTHR34264">
    <property type="entry name" value="ATP SYNTHASE SUBUNIT B, CHLOROPLASTIC"/>
    <property type="match status" value="1"/>
</dbReference>
<dbReference type="PANTHER" id="PTHR34264:SF3">
    <property type="entry name" value="ATP SYNTHASE SUBUNIT B, CHLOROPLASTIC"/>
    <property type="match status" value="1"/>
</dbReference>
<dbReference type="Pfam" id="PF00430">
    <property type="entry name" value="ATP-synt_B"/>
    <property type="match status" value="1"/>
</dbReference>
<geneLocation type="chloroplast"/>
<comment type="function">
    <text evidence="1">F(1)F(0) ATP synthase produces ATP from ADP in the presence of a proton or sodium gradient. F-type ATPases consist of two structural domains, F(1) containing the extramembraneous catalytic core and F(0) containing the membrane proton channel, linked together by a central stalk and a peripheral stalk. During catalysis, ATP synthesis in the catalytic domain of F(1) is coupled via a rotary mechanism of the central stalk subunits to proton translocation.</text>
</comment>
<comment type="function">
    <text evidence="1">Component of the F(0) channel, it forms part of the peripheral stalk, linking F(1) to F(0).</text>
</comment>
<comment type="subunit">
    <text evidence="1">F-type ATPases have 2 components, F(1) - the catalytic core - and F(0) - the membrane proton channel. F(1) has five subunits: alpha(3), beta(3), gamma(1), delta(1), epsilon(1). F(0) has four main subunits: a(1), b(1), b'(1) and c(10-14). The alpha and beta chains form an alternating ring which encloses part of the gamma chain. F(1) is attached to F(0) by a central stalk formed by the gamma and epsilon chains, while a peripheral stalk is formed by the delta, b and b' chains.</text>
</comment>
<comment type="subcellular location">
    <subcellularLocation>
        <location evidence="1">Plastid</location>
        <location evidence="1">Chloroplast thylakoid membrane</location>
        <topology evidence="1">Single-pass membrane protein</topology>
    </subcellularLocation>
</comment>
<comment type="miscellaneous">
    <text>In plastids the F-type ATPase is also known as CF(1)CF(0).</text>
</comment>
<comment type="similarity">
    <text evidence="1">Belongs to the ATPase B chain family.</text>
</comment>
<reference key="1">
    <citation type="submission" date="2007-03" db="EMBL/GenBank/DDBJ databases">
        <title>Sequencing analysis of Nasturtium officinale chloroplast DNA.</title>
        <authorList>
            <person name="Hosouchi T."/>
            <person name="Tsuruoka H."/>
            <person name="Kotani H."/>
        </authorList>
    </citation>
    <scope>NUCLEOTIDE SEQUENCE [LARGE SCALE GENOMIC DNA]</scope>
</reference>
<gene>
    <name evidence="1" type="primary">atpF</name>
</gene>
<feature type="chain" id="PRO_0000368954" description="ATP synthase subunit b, chloroplastic">
    <location>
        <begin position="1"/>
        <end position="184"/>
    </location>
</feature>
<feature type="transmembrane region" description="Helical" evidence="1">
    <location>
        <begin position="27"/>
        <end position="49"/>
    </location>
</feature>
<evidence type="ECO:0000255" key="1">
    <source>
        <dbReference type="HAMAP-Rule" id="MF_01398"/>
    </source>
</evidence>
<organism>
    <name type="scientific">Nasturtium officinale</name>
    <name type="common">Watercress</name>
    <name type="synonym">Rorippa nasturtium-aquaticum</name>
    <dbReference type="NCBI Taxonomy" id="65948"/>
    <lineage>
        <taxon>Eukaryota</taxon>
        <taxon>Viridiplantae</taxon>
        <taxon>Streptophyta</taxon>
        <taxon>Embryophyta</taxon>
        <taxon>Tracheophyta</taxon>
        <taxon>Spermatophyta</taxon>
        <taxon>Magnoliopsida</taxon>
        <taxon>eudicotyledons</taxon>
        <taxon>Gunneridae</taxon>
        <taxon>Pentapetalae</taxon>
        <taxon>rosids</taxon>
        <taxon>malvids</taxon>
        <taxon>Brassicales</taxon>
        <taxon>Brassicaceae</taxon>
        <taxon>Cardamineae</taxon>
        <taxon>Nasturtium</taxon>
    </lineage>
</organism>
<keyword id="KW-0066">ATP synthesis</keyword>
<keyword id="KW-0138">CF(0)</keyword>
<keyword id="KW-0150">Chloroplast</keyword>
<keyword id="KW-0375">Hydrogen ion transport</keyword>
<keyword id="KW-0406">Ion transport</keyword>
<keyword id="KW-0472">Membrane</keyword>
<keyword id="KW-0934">Plastid</keyword>
<keyword id="KW-0793">Thylakoid</keyword>
<keyword id="KW-0812">Transmembrane</keyword>
<keyword id="KW-1133">Transmembrane helix</keyword>
<keyword id="KW-0813">Transport</keyword>
<sequence length="184" mass="21071">MKNLTDSFVYLGHWPSAGSFGFNTDILATNPINLSVVFGVLIFFGKGVLNDLLDNRKQRILNTIRNSEELREGAIQQLENARARLRKVETEADQFRVNGYSEIEREKLNLINSTYKTLKQLENYKNETILFEQQRTINQVRERVFQQALQGAIGTLNSCLSNELHLRTINANIGMFGTMKEITD</sequence>